<proteinExistence type="inferred from homology"/>
<comment type="function">
    <text evidence="1">Binds to DNA and alters its conformation. May be involved in regulation of gene expression, nucleoid organization and DNA protection.</text>
</comment>
<comment type="subunit">
    <text evidence="1">Homodimer.</text>
</comment>
<comment type="subcellular location">
    <subcellularLocation>
        <location evidence="1">Cytoplasm</location>
        <location evidence="1">Nucleoid</location>
    </subcellularLocation>
</comment>
<comment type="similarity">
    <text evidence="1">Belongs to the YbaB/EbfC family.</text>
</comment>
<dbReference type="EMBL" id="CP000090">
    <property type="protein sequence ID" value="AAZ61475.1"/>
    <property type="molecule type" value="Genomic_DNA"/>
</dbReference>
<dbReference type="SMR" id="Q46ZF8"/>
<dbReference type="STRING" id="264198.Reut_A2111"/>
<dbReference type="KEGG" id="reu:Reut_A2111"/>
<dbReference type="eggNOG" id="COG0718">
    <property type="taxonomic scope" value="Bacteria"/>
</dbReference>
<dbReference type="HOGENOM" id="CLU_140930_0_0_4"/>
<dbReference type="OrthoDB" id="9808738at2"/>
<dbReference type="GO" id="GO:0043590">
    <property type="term" value="C:bacterial nucleoid"/>
    <property type="evidence" value="ECO:0007669"/>
    <property type="project" value="UniProtKB-UniRule"/>
</dbReference>
<dbReference type="GO" id="GO:0005829">
    <property type="term" value="C:cytosol"/>
    <property type="evidence" value="ECO:0007669"/>
    <property type="project" value="TreeGrafter"/>
</dbReference>
<dbReference type="GO" id="GO:0003677">
    <property type="term" value="F:DNA binding"/>
    <property type="evidence" value="ECO:0007669"/>
    <property type="project" value="UniProtKB-UniRule"/>
</dbReference>
<dbReference type="FunFam" id="3.30.1310.10:FF:000001">
    <property type="entry name" value="Nucleoid-associated protein YbaB"/>
    <property type="match status" value="1"/>
</dbReference>
<dbReference type="Gene3D" id="3.30.1310.10">
    <property type="entry name" value="Nucleoid-associated protein YbaB-like domain"/>
    <property type="match status" value="1"/>
</dbReference>
<dbReference type="HAMAP" id="MF_00274">
    <property type="entry name" value="DNA_YbaB_EbfC"/>
    <property type="match status" value="1"/>
</dbReference>
<dbReference type="InterPro" id="IPR036894">
    <property type="entry name" value="YbaB-like_sf"/>
</dbReference>
<dbReference type="InterPro" id="IPR004401">
    <property type="entry name" value="YbaB/EbfC"/>
</dbReference>
<dbReference type="NCBIfam" id="TIGR00103">
    <property type="entry name" value="DNA_YbaB_EbfC"/>
    <property type="match status" value="1"/>
</dbReference>
<dbReference type="PANTHER" id="PTHR33449">
    <property type="entry name" value="NUCLEOID-ASSOCIATED PROTEIN YBAB"/>
    <property type="match status" value="1"/>
</dbReference>
<dbReference type="PANTHER" id="PTHR33449:SF1">
    <property type="entry name" value="NUCLEOID-ASSOCIATED PROTEIN YBAB"/>
    <property type="match status" value="1"/>
</dbReference>
<dbReference type="Pfam" id="PF02575">
    <property type="entry name" value="YbaB_DNA_bd"/>
    <property type="match status" value="1"/>
</dbReference>
<dbReference type="PIRSF" id="PIRSF004555">
    <property type="entry name" value="UCP004555"/>
    <property type="match status" value="1"/>
</dbReference>
<dbReference type="SUPFAM" id="SSF82607">
    <property type="entry name" value="YbaB-like"/>
    <property type="match status" value="1"/>
</dbReference>
<gene>
    <name type="ordered locus">Reut_A2111</name>
</gene>
<reference key="1">
    <citation type="journal article" date="2010" name="PLoS ONE">
        <title>The complete multipartite genome sequence of Cupriavidus necator JMP134, a versatile pollutant degrader.</title>
        <authorList>
            <person name="Lykidis A."/>
            <person name="Perez-Pantoja D."/>
            <person name="Ledger T."/>
            <person name="Mavromatis K."/>
            <person name="Anderson I.J."/>
            <person name="Ivanova N.N."/>
            <person name="Hooper S.D."/>
            <person name="Lapidus A."/>
            <person name="Lucas S."/>
            <person name="Gonzalez B."/>
            <person name="Kyrpides N.C."/>
        </authorList>
    </citation>
    <scope>NUCLEOTIDE SEQUENCE [LARGE SCALE GENOMIC DNA]</scope>
    <source>
        <strain>JMP134 / LMG 1197</strain>
    </source>
</reference>
<protein>
    <recommendedName>
        <fullName evidence="1">Nucleoid-associated protein Reut_A2111</fullName>
    </recommendedName>
</protein>
<feature type="chain" id="PRO_1000003805" description="Nucleoid-associated protein Reut_A2111">
    <location>
        <begin position="1"/>
        <end position="108"/>
    </location>
</feature>
<feature type="region of interest" description="Disordered" evidence="2">
    <location>
        <begin position="86"/>
        <end position="108"/>
    </location>
</feature>
<feature type="compositionally biased region" description="Polar residues" evidence="2">
    <location>
        <begin position="86"/>
        <end position="96"/>
    </location>
</feature>
<feature type="compositionally biased region" description="Pro residues" evidence="2">
    <location>
        <begin position="99"/>
        <end position="108"/>
    </location>
</feature>
<accession>Q46ZF8</accession>
<organism>
    <name type="scientific">Cupriavidus pinatubonensis (strain JMP 134 / LMG 1197)</name>
    <name type="common">Cupriavidus necator (strain JMP 134)</name>
    <dbReference type="NCBI Taxonomy" id="264198"/>
    <lineage>
        <taxon>Bacteria</taxon>
        <taxon>Pseudomonadati</taxon>
        <taxon>Pseudomonadota</taxon>
        <taxon>Betaproteobacteria</taxon>
        <taxon>Burkholderiales</taxon>
        <taxon>Burkholderiaceae</taxon>
        <taxon>Cupriavidus</taxon>
    </lineage>
</organism>
<name>Y2111_CUPPJ</name>
<evidence type="ECO:0000255" key="1">
    <source>
        <dbReference type="HAMAP-Rule" id="MF_00274"/>
    </source>
</evidence>
<evidence type="ECO:0000256" key="2">
    <source>
        <dbReference type="SAM" id="MobiDB-lite"/>
    </source>
</evidence>
<sequence length="108" mass="11754">MMKGQLAGLMKQAQQMQENMKKMQEQLAQIEVEGQSGAGLVKVVMTCKNDVKRVTIDPSLLADDKDLLEDLVAAAFNDAVRKAEATTQEKMGSMTSGLPLPPGFKLPF</sequence>
<keyword id="KW-0963">Cytoplasm</keyword>
<keyword id="KW-0238">DNA-binding</keyword>